<name>RL31_BLOFL</name>
<keyword id="KW-0479">Metal-binding</keyword>
<keyword id="KW-1185">Reference proteome</keyword>
<keyword id="KW-0687">Ribonucleoprotein</keyword>
<keyword id="KW-0689">Ribosomal protein</keyword>
<keyword id="KW-0694">RNA-binding</keyword>
<keyword id="KW-0699">rRNA-binding</keyword>
<keyword id="KW-0862">Zinc</keyword>
<proteinExistence type="inferred from homology"/>
<protein>
    <recommendedName>
        <fullName evidence="1">Large ribosomal subunit protein bL31</fullName>
    </recommendedName>
    <alternativeName>
        <fullName evidence="2">50S ribosomal protein L31</fullName>
    </alternativeName>
</protein>
<reference key="1">
    <citation type="journal article" date="2003" name="Proc. Natl. Acad. Sci. U.S.A.">
        <title>The genome sequence of Blochmannia floridanus: comparative analysis of reduced genomes.</title>
        <authorList>
            <person name="Gil R."/>
            <person name="Silva F.J."/>
            <person name="Zientz E."/>
            <person name="Delmotte F."/>
            <person name="Gonzalez-Candelas F."/>
            <person name="Latorre A."/>
            <person name="Rausell C."/>
            <person name="Kamerbeek J."/>
            <person name="Gadau J."/>
            <person name="Hoelldobler B."/>
            <person name="van Ham R.C.H.J."/>
            <person name="Gross R."/>
            <person name="Moya A."/>
        </authorList>
    </citation>
    <scope>NUCLEOTIDE SEQUENCE [LARGE SCALE GENOMIC DNA]</scope>
</reference>
<organism>
    <name type="scientific">Blochmanniella floridana</name>
    <dbReference type="NCBI Taxonomy" id="203907"/>
    <lineage>
        <taxon>Bacteria</taxon>
        <taxon>Pseudomonadati</taxon>
        <taxon>Pseudomonadota</taxon>
        <taxon>Gammaproteobacteria</taxon>
        <taxon>Enterobacterales</taxon>
        <taxon>Enterobacteriaceae</taxon>
        <taxon>ant endosymbionts</taxon>
        <taxon>Candidatus Blochmanniella</taxon>
    </lineage>
</organism>
<feature type="chain" id="PRO_0000173092" description="Large ribosomal subunit protein bL31">
    <location>
        <begin position="1"/>
        <end position="73"/>
    </location>
</feature>
<feature type="binding site" evidence="1">
    <location>
        <position position="16"/>
    </location>
    <ligand>
        <name>Zn(2+)</name>
        <dbReference type="ChEBI" id="CHEBI:29105"/>
    </ligand>
</feature>
<feature type="binding site" evidence="1">
    <location>
        <position position="18"/>
    </location>
    <ligand>
        <name>Zn(2+)</name>
        <dbReference type="ChEBI" id="CHEBI:29105"/>
    </ligand>
</feature>
<feature type="binding site" evidence="1">
    <location>
        <position position="37"/>
    </location>
    <ligand>
        <name>Zn(2+)</name>
        <dbReference type="ChEBI" id="CHEBI:29105"/>
    </ligand>
</feature>
<feature type="binding site" evidence="1">
    <location>
        <position position="40"/>
    </location>
    <ligand>
        <name>Zn(2+)</name>
        <dbReference type="ChEBI" id="CHEBI:29105"/>
    </ligand>
</feature>
<gene>
    <name evidence="1" type="primary">rpmE</name>
    <name type="ordered locus">Bfl599</name>
</gene>
<dbReference type="EMBL" id="BX248583">
    <property type="protein sequence ID" value="CAD83274.1"/>
    <property type="molecule type" value="Genomic_DNA"/>
</dbReference>
<dbReference type="SMR" id="Q7VRL2"/>
<dbReference type="STRING" id="203907.Bfl599"/>
<dbReference type="KEGG" id="bfl:Bfl599"/>
<dbReference type="eggNOG" id="COG0254">
    <property type="taxonomic scope" value="Bacteria"/>
</dbReference>
<dbReference type="HOGENOM" id="CLU_114306_4_0_6"/>
<dbReference type="OrthoDB" id="9803251at2"/>
<dbReference type="Proteomes" id="UP000002192">
    <property type="component" value="Chromosome"/>
</dbReference>
<dbReference type="GO" id="GO:1990904">
    <property type="term" value="C:ribonucleoprotein complex"/>
    <property type="evidence" value="ECO:0007669"/>
    <property type="project" value="UniProtKB-KW"/>
</dbReference>
<dbReference type="GO" id="GO:0005840">
    <property type="term" value="C:ribosome"/>
    <property type="evidence" value="ECO:0007669"/>
    <property type="project" value="UniProtKB-KW"/>
</dbReference>
<dbReference type="GO" id="GO:0046872">
    <property type="term" value="F:metal ion binding"/>
    <property type="evidence" value="ECO:0007669"/>
    <property type="project" value="UniProtKB-KW"/>
</dbReference>
<dbReference type="GO" id="GO:0019843">
    <property type="term" value="F:rRNA binding"/>
    <property type="evidence" value="ECO:0007669"/>
    <property type="project" value="UniProtKB-KW"/>
</dbReference>
<dbReference type="GO" id="GO:0003735">
    <property type="term" value="F:structural constituent of ribosome"/>
    <property type="evidence" value="ECO:0007669"/>
    <property type="project" value="InterPro"/>
</dbReference>
<dbReference type="GO" id="GO:0006412">
    <property type="term" value="P:translation"/>
    <property type="evidence" value="ECO:0007669"/>
    <property type="project" value="UniProtKB-UniRule"/>
</dbReference>
<dbReference type="Gene3D" id="4.10.830.30">
    <property type="entry name" value="Ribosomal protein L31"/>
    <property type="match status" value="1"/>
</dbReference>
<dbReference type="HAMAP" id="MF_00501">
    <property type="entry name" value="Ribosomal_bL31_1"/>
    <property type="match status" value="1"/>
</dbReference>
<dbReference type="InterPro" id="IPR034704">
    <property type="entry name" value="Ribosomal_bL28/bL31-like_sf"/>
</dbReference>
<dbReference type="InterPro" id="IPR002150">
    <property type="entry name" value="Ribosomal_bL31"/>
</dbReference>
<dbReference type="InterPro" id="IPR027491">
    <property type="entry name" value="Ribosomal_bL31_A"/>
</dbReference>
<dbReference type="InterPro" id="IPR042105">
    <property type="entry name" value="Ribosomal_bL31_sf"/>
</dbReference>
<dbReference type="NCBIfam" id="TIGR00105">
    <property type="entry name" value="L31"/>
    <property type="match status" value="1"/>
</dbReference>
<dbReference type="NCBIfam" id="NF000612">
    <property type="entry name" value="PRK00019.1"/>
    <property type="match status" value="1"/>
</dbReference>
<dbReference type="PANTHER" id="PTHR33280">
    <property type="entry name" value="50S RIBOSOMAL PROTEIN L31, CHLOROPLASTIC"/>
    <property type="match status" value="1"/>
</dbReference>
<dbReference type="PANTHER" id="PTHR33280:SF6">
    <property type="entry name" value="LARGE RIBOSOMAL SUBUNIT PROTEIN BL31A"/>
    <property type="match status" value="1"/>
</dbReference>
<dbReference type="Pfam" id="PF01197">
    <property type="entry name" value="Ribosomal_L31"/>
    <property type="match status" value="1"/>
</dbReference>
<dbReference type="PRINTS" id="PR01249">
    <property type="entry name" value="RIBOSOMALL31"/>
</dbReference>
<dbReference type="SUPFAM" id="SSF143800">
    <property type="entry name" value="L28p-like"/>
    <property type="match status" value="1"/>
</dbReference>
<dbReference type="PROSITE" id="PS01143">
    <property type="entry name" value="RIBOSOMAL_L31"/>
    <property type="match status" value="1"/>
</dbReference>
<evidence type="ECO:0000255" key="1">
    <source>
        <dbReference type="HAMAP-Rule" id="MF_00501"/>
    </source>
</evidence>
<evidence type="ECO:0000305" key="2"/>
<comment type="function">
    <text evidence="1">Binds the 23S rRNA.</text>
</comment>
<comment type="cofactor">
    <cofactor evidence="1">
        <name>Zn(2+)</name>
        <dbReference type="ChEBI" id="CHEBI:29105"/>
    </cofactor>
    <text evidence="1">Binds 1 zinc ion per subunit.</text>
</comment>
<comment type="subunit">
    <text evidence="1">Part of the 50S ribosomal subunit.</text>
</comment>
<comment type="similarity">
    <text evidence="1">Belongs to the bacterial ribosomal protein bL31 family. Type A subfamily.</text>
</comment>
<accession>Q7VRL2</accession>
<sequence>MKKNIHPQYNVISASCSCGNVIHVRSTLKHNINLDVCDACHPFYTGTQRIIDTRGRVNLFNKRFNKNNKNPFI</sequence>